<gene>
    <name evidence="32" type="primary">FZR1</name>
    <name evidence="22" type="synonym">CDH1</name>
    <name type="synonym">FYR</name>
    <name type="synonym">FZR</name>
    <name type="synonym">KIAA1242</name>
</gene>
<comment type="function">
    <text evidence="5 7 8 12 19">Substrate-specific adapter for the anaphase promoting complex/cyclosome (APC/C) E3 ubiquitin-protein ligase complex. Associates with the APC/C in late mitosis, in replacement of CDC20, and activates the APC/C during anaphase and telophase. The APC/C remains active in degrading substrates to ensure that positive regulators of the cell cycle do not accumulate prematurely. At the G1/S transition FZR1 is phosphorylated, leading to its dissociation from the APC/C. Following DNA damage, it is required for the G2 DNA damage checkpoint: its dephosphorylation and reassociation with the APC/C leads to the ubiquitination of PLK1, preventing entry into mitosis. Acts as an adapter for APC/C to target the DNA-end resection factor RBBP8/CtIP for ubiquitination and subsequent proteasomal degradation. Through the regulation of RBBP8/CtIP protein turnover, may play a role in DNA damage response, favoring DNA double-strand repair through error-prone non-homologous end joining (NHEJ) over error-free, RBBP8-mediated homologous recombination (HR) (PubMed:25349192).</text>
</comment>
<comment type="pathway">
    <text>Protein modification; protein ubiquitination.</text>
</comment>
<comment type="subunit">
    <text evidence="2 3 5 6 8 9 10 11 12 13 14 15 17 19">The unphosphorylated form interacts with APC/C during mitosis (PubMed:26083744, PubMed:9734353). Interacts with NINL (PubMed:17403670). Interacts (in complex with the anaphase promoting complex APC) with MAD2L2; inhibits FZR1-mediated APC/C activation (PubMed:11459825, PubMed:11459826). Interacts with SIRT2 and USP37 (PubMed:21596315, PubMed:22014574). Interacts (via WD repeats) with MAK (PubMed:21986944). Interacts with RBBP8/CtIP; this interaction leads to RBBP8 proteasomal degradation (PubMed:25349192). Interacts with HECW2 (PubMed:24163370). Interacts with SASS6; the interaction is regulated by CENATAC and leads to SASS6 proteasomal degradation (PubMed:31722219). Interacts (via N-terminus) with CCNF (PubMed:27653696). Interacts with CDC6 (PubMed:26818844). Interacts with TK1 (via the KEN box) (PubMed:14701726).</text>
</comment>
<comment type="interaction">
    <interactant intactId="EBI-724997">
        <id>Q9UM11</id>
    </interactant>
    <interactant intactId="EBI-994813">
        <id>P30260</id>
        <label>CDC27</label>
    </interactant>
    <organismsDiffer>false</organismsDiffer>
    <experiments>15</experiments>
</comment>
<comment type="interaction">
    <interactant intactId="EBI-724997">
        <id>Q9UM11</id>
    </interactant>
    <interactant intactId="EBI-1369377">
        <id>Q9HAW4</id>
        <label>CLSPN</label>
    </interactant>
    <organismsDiffer>false</organismsDiffer>
    <experiments>4</experiments>
</comment>
<comment type="interaction">
    <interactant intactId="EBI-724997">
        <id>Q9UM11</id>
    </interactant>
    <interactant intactId="EBI-77889">
        <id>Q9UI95</id>
        <label>MAD2L2</label>
    </interactant>
    <organismsDiffer>false</organismsDiffer>
    <experiments>2</experiments>
</comment>
<comment type="interaction">
    <interactant intactId="EBI-724997">
        <id>Q9UM11</id>
    </interactant>
    <interactant intactId="EBI-3911321">
        <id>P20794</id>
        <label>MAK</label>
    </interactant>
    <organismsDiffer>false</organismsDiffer>
    <experiments>7</experiments>
</comment>
<comment type="interaction">
    <interactant intactId="EBI-724997">
        <id>Q9UM11</id>
    </interactant>
    <interactant intactId="EBI-968231">
        <id>O75943</id>
        <label>RAD17</label>
    </interactant>
    <organismsDiffer>false</organismsDiffer>
    <experiments>2</experiments>
</comment>
<comment type="interaction">
    <interactant intactId="EBI-724997">
        <id>Q9UM11</id>
    </interactant>
    <interactant intactId="EBI-2339245">
        <id>P31350</id>
        <label>RRM2</label>
    </interactant>
    <organismsDiffer>false</organismsDiffer>
    <experiments>7</experiments>
</comment>
<comment type="interaction">
    <interactant intactId="EBI-724997">
        <id>Q9UM11</id>
    </interactant>
    <interactant intactId="EBI-5240785">
        <id>Q8IXJ6-2</id>
        <label>SIRT2</label>
    </interactant>
    <organismsDiffer>false</organismsDiffer>
    <experiments>2</experiments>
</comment>
<comment type="interaction">
    <interactant intactId="EBI-724997">
        <id>Q9UM11</id>
    </interactant>
    <interactant intactId="EBI-456291">
        <id>Q13309</id>
        <label>SKP2</label>
    </interactant>
    <organismsDiffer>false</organismsDiffer>
    <experiments>4</experiments>
</comment>
<comment type="interaction">
    <interactant intactId="EBI-724997">
        <id>Q9UM11</id>
    </interactant>
    <interactant intactId="EBI-301246">
        <id>P40337</id>
        <label>VHL</label>
    </interactant>
    <organismsDiffer>false</organismsDiffer>
    <experiments>2</experiments>
</comment>
<comment type="interaction">
    <interactant intactId="EBI-724997">
        <id>Q9UM11</id>
    </interactant>
    <interactant intactId="EBI-3504450">
        <id>P40337-1</id>
        <label>VHL</label>
    </interactant>
    <organismsDiffer>false</organismsDiffer>
    <experiments>2</experiments>
</comment>
<comment type="interaction">
    <interactant intactId="EBI-724997">
        <id>Q9UM11</id>
    </interactant>
    <interactant intactId="EBI-301270">
        <id>P40337-3</id>
        <label>VHL</label>
    </interactant>
    <organismsDiffer>false</organismsDiffer>
    <experiments>2</experiments>
</comment>
<comment type="subcellular location">
    <molecule>Isoform 2</molecule>
    <subcellularLocation>
        <location evidence="18">Nucleus</location>
    </subcellularLocation>
</comment>
<comment type="subcellular location">
    <molecule>Isoform 3</molecule>
    <subcellularLocation>
        <location>Cytoplasm</location>
    </subcellularLocation>
</comment>
<comment type="alternative products">
    <event type="alternative splicing"/>
    <isoform>
        <id>Q9UM11-1</id>
        <name>1</name>
        <sequence type="displayed"/>
    </isoform>
    <isoform>
        <id>Q9UM11-2</id>
        <name>2</name>
        <name>CDH1alpha</name>
        <name>Fzr1</name>
        <sequence type="described" ref="VSP_008504"/>
    </isoform>
    <isoform>
        <id>Q9UM11-3</id>
        <name>3</name>
        <name>CDH1beta</name>
        <name>Fzr2</name>
        <sequence type="described" ref="VSP_008503 VSP_008504"/>
    </isoform>
</comment>
<comment type="tissue specificity">
    <text evidence="4">Isoform 2 is expressed at high levels in heart, liver, spleen and some cancer cell lines whereas isoform 3 is expressed only at low levels in these tissues.</text>
</comment>
<comment type="PTM">
    <text evidence="10">Acetylated. Deacetylated by SIRT2 at Lys-69 and Lys-159; deacetylation enhances the interaction of FZR1 with CDC27, leading to activation of anaphase promoting complex/cyclosome (APC/C).</text>
</comment>
<comment type="PTM">
    <text evidence="7 9">Following DNA damage, it is dephosphorylated by CDC14B in G2 phase, leading to its reassociation with the APC/C, and allowing an efficient G2 DNA damage checkpoint (PubMed:18662541). Phosphorylated by MAK (PubMed:21986944).</text>
</comment>
<comment type="PTM">
    <text evidence="15">Ubiquitinated by the SCF(CCNF) E3 ubiquitin-protein ligase complex; leading to its degradation by the proteasome.</text>
</comment>
<comment type="disease" evidence="16 18">
    <disease id="DI-06557">
        <name>Developmental and epileptic encephalopathy 109</name>
        <acronym>DEE109</acronym>
        <description>A form of epileptic encephalopathy, a heterogeneous group of early-onset epilepsies characterized by refractory seizures, neurodevelopmental impairment, and poor prognosis. Development is normal prior to seizure onset, after which cognitive and motor delays become apparent. DEE109 is an autosomal dominant form characterized by the onset of various types of seizures in the first months or years of life.</description>
        <dbReference type="MIM" id="620145"/>
    </disease>
    <text>The disease is caused by variants affecting the gene represented in this entry.</text>
</comment>
<comment type="miscellaneous">
    <molecule>Isoform 2</molecule>
    <text evidence="29">Major.</text>
</comment>
<comment type="miscellaneous">
    <molecule>Isoform 3</molecule>
    <text evidence="29">Minor.</text>
</comment>
<comment type="similarity">
    <text evidence="29">Belongs to the WD repeat CDC20/Fizzy family.</text>
</comment>
<comment type="caution">
    <text evidence="30 31">Originally thought to be phosphorylated by MPF during mitosis. However this paper was retracted due to falsification of data.</text>
</comment>
<comment type="sequence caution" evidence="29">
    <conflict type="miscellaneous discrepancy">
        <sequence resource="EMBL-CDS" id="AAD26623"/>
    </conflict>
    <text>Contaminating sequence. Sequence of unknown origin in the C-terminal part.</text>
</comment>
<comment type="sequence caution" evidence="29">
    <conflict type="miscellaneous discrepancy">
        <sequence resource="EMBL-CDS" id="AAD26624"/>
    </conflict>
    <text>Contaminating sequence. Sequence of unknown origin in the N-terminal part.</text>
</comment>
<comment type="sequence caution" evidence="29">
    <conflict type="erroneous initiation">
        <sequence resource="EMBL-CDS" id="BAA86556"/>
    </conflict>
    <text>Extended N-terminus.</text>
</comment>
<protein>
    <recommendedName>
        <fullName evidence="29">Fizzy-related protein homolog</fullName>
        <shortName>Fzr</shortName>
    </recommendedName>
    <alternativeName>
        <fullName>CDC20-like protein 1</fullName>
    </alternativeName>
    <alternativeName>
        <fullName>Cdh1/Hct1 homolog</fullName>
        <shortName evidence="24">hCDH1</shortName>
    </alternativeName>
</protein>
<accession>Q9UM11</accession>
<accession>O75869</accession>
<accession>Q86U66</accession>
<accession>Q96NW8</accession>
<accession>Q9UI96</accession>
<accession>Q9ULH8</accession>
<accession>Q9UM10</accession>
<accession>Q9UNQ1</accession>
<accession>Q9Y2T8</accession>
<keyword id="KW-0002">3D-structure</keyword>
<keyword id="KW-0007">Acetylation</keyword>
<keyword id="KW-0025">Alternative splicing</keyword>
<keyword id="KW-0131">Cell cycle</keyword>
<keyword id="KW-0132">Cell division</keyword>
<keyword id="KW-0963">Cytoplasm</keyword>
<keyword id="KW-0225">Disease variant</keyword>
<keyword id="KW-0227">DNA damage</keyword>
<keyword id="KW-0234">DNA repair</keyword>
<keyword id="KW-0887">Epilepsy</keyword>
<keyword id="KW-0991">Intellectual disability</keyword>
<keyword id="KW-0498">Mitosis</keyword>
<keyword id="KW-0539">Nucleus</keyword>
<keyword id="KW-0597">Phosphoprotein</keyword>
<keyword id="KW-1267">Proteomics identification</keyword>
<keyword id="KW-1185">Reference proteome</keyword>
<keyword id="KW-0677">Repeat</keyword>
<keyword id="KW-0832">Ubl conjugation</keyword>
<keyword id="KW-0833">Ubl conjugation pathway</keyword>
<keyword id="KW-0853">WD repeat</keyword>
<reference key="1">
    <citation type="journal article" date="1998" name="Curr. Biol.">
        <title>Activation of the human anaphase-promoting complex by proteins of the CDC20/Fizzy family.</title>
        <authorList>
            <person name="Kramer E.R."/>
            <person name="Gieffers C."/>
            <person name="Hoelzl G."/>
            <person name="Hengstschlaeger M."/>
            <person name="Peters J.-M."/>
        </authorList>
    </citation>
    <scope>NUCLEOTIDE SEQUENCE [MRNA] (ISOFORM 2)</scope>
    <source>
        <tissue>Parathyroid adenoma</tissue>
    </source>
</reference>
<reference key="2">
    <citation type="submission" date="1998-04" db="EMBL/GenBank/DDBJ databases">
        <title>Human homologue of Fizzy-related protein.</title>
        <authorList>
            <person name="Kotani S."/>
            <person name="Oyamatu T."/>
            <person name="Todokoro K."/>
        </authorList>
    </citation>
    <scope>NUCLEOTIDE SEQUENCE [MRNA] (ISOFORMS 1 AND 3)</scope>
</reference>
<reference key="3">
    <citation type="submission" date="1998-07" db="EMBL/GenBank/DDBJ databases">
        <title>Identification of a human homolog of the Drosophila fizzy-related protein.</title>
        <authorList>
            <person name="Sudo T."/>
            <person name="Saya H."/>
        </authorList>
    </citation>
    <scope>NUCLEOTIDE SEQUENCE [MRNA] (ISOFORM 2)</scope>
    <source>
        <tissue>Brain</tissue>
    </source>
</reference>
<reference key="4">
    <citation type="journal article" date="2003" name="Biochem. J.">
        <title>Differential expression, localization and activity of two alternatively spliced isoforms of human APC regulator CDH1.</title>
        <authorList>
            <person name="Zhou Y."/>
            <person name="Ching Y.-P."/>
            <person name="Ng R.W.M."/>
            <person name="Jin D.-Y."/>
        </authorList>
    </citation>
    <scope>NUCLEOTIDE SEQUENCE [MRNA] (ISOFORMS 2 AND 3)</scope>
    <scope>SUBCELLULAR LOCATION</scope>
    <scope>TISSUE SPECIFICITY</scope>
</reference>
<reference key="5">
    <citation type="journal article" date="1999" name="DNA Res.">
        <title>Prediction of the coding sequences of unidentified human genes. XV. The complete sequences of 100 new cDNA clones from brain which code for large proteins in vitro.</title>
        <authorList>
            <person name="Nagase T."/>
            <person name="Ishikawa K."/>
            <person name="Kikuno R."/>
            <person name="Hirosawa M."/>
            <person name="Nomura N."/>
            <person name="Ohara O."/>
        </authorList>
    </citation>
    <scope>NUCLEOTIDE SEQUENCE [LARGE SCALE MRNA] (ISOFORM 2)</scope>
    <source>
        <tissue>Brain</tissue>
    </source>
</reference>
<reference key="6">
    <citation type="submission" date="2003-05" db="EMBL/GenBank/DDBJ databases">
        <title>Cloning of human full-length CDSs in BD Creator(TM) system donor vector.</title>
        <authorList>
            <person name="Kalnine N."/>
            <person name="Chen X."/>
            <person name="Rolfs A."/>
            <person name="Halleck A."/>
            <person name="Hines L."/>
            <person name="Eisenstein S."/>
            <person name="Koundinya M."/>
            <person name="Raphael J."/>
            <person name="Moreira D."/>
            <person name="Kelley T."/>
            <person name="LaBaer J."/>
            <person name="Lin Y."/>
            <person name="Phelan M."/>
            <person name="Farmer A."/>
        </authorList>
    </citation>
    <scope>NUCLEOTIDE SEQUENCE [LARGE SCALE MRNA] (ISOFORM 2)</scope>
</reference>
<reference key="7">
    <citation type="journal article" date="2004" name="Nature">
        <title>The DNA sequence and biology of human chromosome 19.</title>
        <authorList>
            <person name="Grimwood J."/>
            <person name="Gordon L.A."/>
            <person name="Olsen A.S."/>
            <person name="Terry A."/>
            <person name="Schmutz J."/>
            <person name="Lamerdin J.E."/>
            <person name="Hellsten U."/>
            <person name="Goodstein D."/>
            <person name="Couronne O."/>
            <person name="Tran-Gyamfi M."/>
            <person name="Aerts A."/>
            <person name="Altherr M."/>
            <person name="Ashworth L."/>
            <person name="Bajorek E."/>
            <person name="Black S."/>
            <person name="Branscomb E."/>
            <person name="Caenepeel S."/>
            <person name="Carrano A.V."/>
            <person name="Caoile C."/>
            <person name="Chan Y.M."/>
            <person name="Christensen M."/>
            <person name="Cleland C.A."/>
            <person name="Copeland A."/>
            <person name="Dalin E."/>
            <person name="Dehal P."/>
            <person name="Denys M."/>
            <person name="Detter J.C."/>
            <person name="Escobar J."/>
            <person name="Flowers D."/>
            <person name="Fotopulos D."/>
            <person name="Garcia C."/>
            <person name="Georgescu A.M."/>
            <person name="Glavina T."/>
            <person name="Gomez M."/>
            <person name="Gonzales E."/>
            <person name="Groza M."/>
            <person name="Hammon N."/>
            <person name="Hawkins T."/>
            <person name="Haydu L."/>
            <person name="Ho I."/>
            <person name="Huang W."/>
            <person name="Israni S."/>
            <person name="Jett J."/>
            <person name="Kadner K."/>
            <person name="Kimball H."/>
            <person name="Kobayashi A."/>
            <person name="Larionov V."/>
            <person name="Leem S.-H."/>
            <person name="Lopez F."/>
            <person name="Lou Y."/>
            <person name="Lowry S."/>
            <person name="Malfatti S."/>
            <person name="Martinez D."/>
            <person name="McCready P.M."/>
            <person name="Medina C."/>
            <person name="Morgan J."/>
            <person name="Nelson K."/>
            <person name="Nolan M."/>
            <person name="Ovcharenko I."/>
            <person name="Pitluck S."/>
            <person name="Pollard M."/>
            <person name="Popkie A.P."/>
            <person name="Predki P."/>
            <person name="Quan G."/>
            <person name="Ramirez L."/>
            <person name="Rash S."/>
            <person name="Retterer J."/>
            <person name="Rodriguez A."/>
            <person name="Rogers S."/>
            <person name="Salamov A."/>
            <person name="Salazar A."/>
            <person name="She X."/>
            <person name="Smith D."/>
            <person name="Slezak T."/>
            <person name="Solovyev V."/>
            <person name="Thayer N."/>
            <person name="Tice H."/>
            <person name="Tsai M."/>
            <person name="Ustaszewska A."/>
            <person name="Vo N."/>
            <person name="Wagner M."/>
            <person name="Wheeler J."/>
            <person name="Wu K."/>
            <person name="Xie G."/>
            <person name="Yang J."/>
            <person name="Dubchak I."/>
            <person name="Furey T.S."/>
            <person name="DeJong P."/>
            <person name="Dickson M."/>
            <person name="Gordon D."/>
            <person name="Eichler E.E."/>
            <person name="Pennacchio L.A."/>
            <person name="Richardson P."/>
            <person name="Stubbs L."/>
            <person name="Rokhsar D.S."/>
            <person name="Myers R.M."/>
            <person name="Rubin E.M."/>
            <person name="Lucas S.M."/>
        </authorList>
    </citation>
    <scope>NUCLEOTIDE SEQUENCE [LARGE SCALE GENOMIC DNA]</scope>
</reference>
<reference key="8">
    <citation type="journal article" date="2004" name="Genome Res.">
        <title>The status, quality, and expansion of the NIH full-length cDNA project: the Mammalian Gene Collection (MGC).</title>
        <authorList>
            <consortium name="The MGC Project Team"/>
        </authorList>
    </citation>
    <scope>NUCLEOTIDE SEQUENCE [LARGE SCALE MRNA] (ISOFORM 2)</scope>
    <source>
        <tissue>Brain</tissue>
    </source>
</reference>
<reference key="9">
    <citation type="journal article" date="1998" name="Mol. Cell">
        <title>Direct binding of CDC20 protein family members activates the anaphase-promoting complex in mitosis and G1.</title>
        <authorList>
            <person name="Fang G."/>
            <person name="Yu H."/>
            <person name="Kirschner M.W."/>
        </authorList>
    </citation>
    <scope>FUNCTION</scope>
    <scope>INTERACTION WITH APC/C</scope>
</reference>
<reference key="10">
    <citation type="journal article" date="1999" name="J. Cell Biol.">
        <title>Regulation of APC activity by phosphorylation and regulatory factors.</title>
        <authorList>
            <person name="Kotani S."/>
            <person name="Tanaka H."/>
            <person name="Yasuda H."/>
            <person name="Todokoro K."/>
        </authorList>
    </citation>
    <scope>RETRACTED PAPER</scope>
</reference>
<reference key="11">
    <citation type="journal article" date="2005" name="J. Cell Biol.">
        <authorList>
            <person name="Tanaka H."/>
            <person name="Yasuda H."/>
            <person name="Todokoro K."/>
        </authorList>
    </citation>
    <scope>RETRACTION NOTICE OF PUBMED:10459014</scope>
</reference>
<reference key="12">
    <citation type="journal article" date="2001" name="Genes Dev.">
        <title>Inhibition of Cdh1-APC by the MAD2-related protein MAD2L2: a novel mechanism for regulating Cdh1.</title>
        <authorList>
            <person name="Pfleger C.M."/>
            <person name="Salic A."/>
            <person name="Lee E."/>
            <person name="Kirschner M.W."/>
        </authorList>
    </citation>
    <scope>INTERACTION WITH MAD2L2</scope>
</reference>
<reference key="13">
    <citation type="journal article" date="2001" name="Genes Dev.">
        <title>MAD2B is an inhibitor of the anaphase-promoting complex.</title>
        <authorList>
            <person name="Chen J."/>
            <person name="Fang G."/>
        </authorList>
    </citation>
    <scope>INTERACTION WITH MAD2L2</scope>
</reference>
<reference key="14">
    <citation type="journal article" date="2004" name="Mol. Cell. Biol.">
        <title>Mitotic degradation of human thymidine kinase 1 is dependent on the anaphase-promoting complex/cyclosome-CDH1-mediated pathway.</title>
        <authorList>
            <person name="Ke P.Y."/>
            <person name="Chang Z.F."/>
        </authorList>
    </citation>
    <scope>INTERACTION WITH TK1</scope>
    <scope>FUNCTION</scope>
</reference>
<reference key="15">
    <citation type="journal article" date="2007" name="J. Biol. Chem.">
        <title>Cell cycle-dependent expression of centrosomal ninein-like protein in human cells is regulated by the anaphase-promoting complex.</title>
        <authorList>
            <person name="Wang Y."/>
            <person name="Zhan Q."/>
        </authorList>
    </citation>
    <scope>INTERACTION WITH NINL</scope>
</reference>
<reference key="16">
    <citation type="journal article" date="2008" name="Cell">
        <title>The Cdc14B-Cdh1-Plk1 axis controls the G2 DNA-damage-response checkpoint.</title>
        <authorList>
            <person name="Bassermann F."/>
            <person name="Frescas D."/>
            <person name="Guardavaccaro D."/>
            <person name="Busino L."/>
            <person name="Peschiaroli A."/>
            <person name="Pagano M."/>
        </authorList>
    </citation>
    <scope>FUNCTION</scope>
    <scope>PHOSPHORYLATION</scope>
    <scope>DEPHOSPHORYLATION BY CDC14</scope>
    <scope>MUTAGENESIS OF SER-40; THR-121; SER-151 AND SER-163</scope>
</reference>
<reference key="17">
    <citation type="journal article" date="2008" name="Proc. Natl. Acad. Sci. U.S.A.">
        <title>A quantitative atlas of mitotic phosphorylation.</title>
        <authorList>
            <person name="Dephoure N."/>
            <person name="Zhou C."/>
            <person name="Villen J."/>
            <person name="Beausoleil S.A."/>
            <person name="Bakalarski C.E."/>
            <person name="Elledge S.J."/>
            <person name="Gygi S.P."/>
        </authorList>
    </citation>
    <scope>PHOSPHORYLATION [LARGE SCALE ANALYSIS] AT THR-32; SER-36; SER-138; SER-146 AND SER-151</scope>
    <scope>IDENTIFICATION BY MASS SPECTROMETRY [LARGE SCALE ANALYSIS]</scope>
    <source>
        <tissue>Cervix carcinoma</tissue>
    </source>
</reference>
<reference key="18">
    <citation type="journal article" date="2009" name="Sci. Signal.">
        <title>Quantitative phosphoproteomic analysis of T cell receptor signaling reveals system-wide modulation of protein-protein interactions.</title>
        <authorList>
            <person name="Mayya V."/>
            <person name="Lundgren D.H."/>
            <person name="Hwang S.-I."/>
            <person name="Rezaul K."/>
            <person name="Wu L."/>
            <person name="Eng J.K."/>
            <person name="Rodionov V."/>
            <person name="Han D.K."/>
        </authorList>
    </citation>
    <scope>PHOSPHORYLATION [LARGE SCALE ANALYSIS] AT SER-36 AND SER-151</scope>
    <scope>IDENTIFICATION BY MASS SPECTROMETRY [LARGE SCALE ANALYSIS]</scope>
    <source>
        <tissue>Leukemic T-cell</tissue>
    </source>
</reference>
<reference key="19">
    <citation type="journal article" date="2010" name="Sci. Signal.">
        <title>Quantitative phosphoproteomics reveals widespread full phosphorylation site occupancy during mitosis.</title>
        <authorList>
            <person name="Olsen J.V."/>
            <person name="Vermeulen M."/>
            <person name="Santamaria A."/>
            <person name="Kumar C."/>
            <person name="Miller M.L."/>
            <person name="Jensen L.J."/>
            <person name="Gnad F."/>
            <person name="Cox J."/>
            <person name="Jensen T.S."/>
            <person name="Nigg E.A."/>
            <person name="Brunak S."/>
            <person name="Mann M."/>
        </authorList>
    </citation>
    <scope>IDENTIFICATION BY MASS SPECTROMETRY [LARGE SCALE ANALYSIS]</scope>
    <source>
        <tissue>Cervix carcinoma</tissue>
    </source>
</reference>
<reference key="20">
    <citation type="journal article" date="2011" name="Mol. Cell">
        <title>Deubiquitinase USP37 is activated by CDK2 to antagonize APC(CDH1) and promote S phase entry.</title>
        <authorList>
            <person name="Huang X."/>
            <person name="Summers M.K."/>
            <person name="Pham V."/>
            <person name="Lill J.R."/>
            <person name="Liu J."/>
            <person name="Lee G."/>
            <person name="Kirkpatrick D.S."/>
            <person name="Jackson P.K."/>
            <person name="Fang G."/>
            <person name="Dixit V.M."/>
        </authorList>
    </citation>
    <scope>FUNCTION</scope>
    <scope>INTERACTION WITH USP37</scope>
</reference>
<reference key="21">
    <citation type="journal article" date="2011" name="Cancer Cell">
        <title>SIRT2 maintains genome integrity and suppresses tumorigenesis through regulating APC/C activity.</title>
        <authorList>
            <person name="Kim H.S."/>
            <person name="Vassilopoulos A."/>
            <person name="Wang R.H."/>
            <person name="Lahusen T."/>
            <person name="Xiao Z."/>
            <person name="Xu X."/>
            <person name="Li C."/>
            <person name="Veenstra T.D."/>
            <person name="Li B."/>
            <person name="Yu H."/>
            <person name="Ji J."/>
            <person name="Wang X.W."/>
            <person name="Park S.H."/>
            <person name="Cha Y.I."/>
            <person name="Gius D."/>
            <person name="Deng C.X."/>
        </authorList>
    </citation>
    <scope>ACETYLATION AT LYS-69 AND LYS-159</scope>
    <scope>DEACETYLATION BY SIRT2</scope>
    <scope>INTERACTION WITH SIRT2</scope>
</reference>
<reference key="22">
    <citation type="journal article" date="2012" name="Oncogene">
        <title>Male germ cell-associated kinase is overexpressed in prostate cancer cells and causes mitotic defects via deregulation of APC/C(CDH1).</title>
        <authorList>
            <person name="Wang L.Y."/>
            <person name="Kung H.J."/>
        </authorList>
    </citation>
    <scope>INTERACTION WITH MAK</scope>
    <scope>PHOSPHORYLATION</scope>
</reference>
<reference key="23">
    <citation type="journal article" date="2013" name="J. Biol. Chem.">
        <title>The HECT type ubiquitin ligase NEDL2 is degraded by anaphase-promoting complex/cyclosome (APC/C)-Cdh1, and its tight regulation maintains the metaphase to anaphase transition.</title>
        <authorList>
            <person name="Lu L."/>
            <person name="Hu S."/>
            <person name="Wei R."/>
            <person name="Qiu X."/>
            <person name="Lu K."/>
            <person name="Fu Y."/>
            <person name="Li H."/>
            <person name="Xing G."/>
            <person name="Li D."/>
            <person name="Peng R."/>
            <person name="He F."/>
            <person name="Zhang L."/>
        </authorList>
    </citation>
    <scope>INTERACTION WITH HECW2</scope>
</reference>
<reference key="24">
    <citation type="journal article" date="2013" name="J. Proteome Res.">
        <title>Toward a comprehensive characterization of a human cancer cell phosphoproteome.</title>
        <authorList>
            <person name="Zhou H."/>
            <person name="Di Palma S."/>
            <person name="Preisinger C."/>
            <person name="Peng M."/>
            <person name="Polat A.N."/>
            <person name="Heck A.J."/>
            <person name="Mohammed S."/>
        </authorList>
    </citation>
    <scope>PHOSPHORYLATION [LARGE SCALE ANALYSIS] AT SER-133; SER-138 AND SER-151</scope>
    <scope>IDENTIFICATION BY MASS SPECTROMETRY [LARGE SCALE ANALYSIS]</scope>
    <source>
        <tissue>Cervix carcinoma</tissue>
        <tissue>Erythroleukemia</tissue>
    </source>
</reference>
<reference key="25">
    <citation type="journal article" date="2014" name="EMBO J.">
        <title>APC/C(Cdh1) controls CtIP stability during the cell cycle and in response to DNA damage.</title>
        <authorList>
            <person name="Lafranchi L."/>
            <person name="de Boer H.R."/>
            <person name="de Vries E.G."/>
            <person name="Ong S.E."/>
            <person name="Sartori A.A."/>
            <person name="van Vugt M.A."/>
        </authorList>
    </citation>
    <scope>FUNCTION</scope>
    <scope>INTERACTION WITH RBBP8/CTIP</scope>
</reference>
<reference key="26">
    <citation type="journal article" date="2016" name="Cell Rep.">
        <title>APC/C and SCF(cyclin F) Constitute a Reciprocal Feedback Circuit Controlling S-Phase Entry.</title>
        <authorList>
            <person name="Choudhury R."/>
            <person name="Bonacci T."/>
            <person name="Arceci A."/>
            <person name="Lahiri D."/>
            <person name="Mills C.A."/>
            <person name="Kernan J.L."/>
            <person name="Branigan T.B."/>
            <person name="DeCaprio J.A."/>
            <person name="Burke D.J."/>
            <person name="Emanuele M.J."/>
        </authorList>
    </citation>
    <scope>INTERACTION WITH CCNF</scope>
    <scope>UBIQUITINATION</scope>
    <scope>MUTAGENESIS OF 7-ARG--VAL-14</scope>
</reference>
<reference key="27">
    <citation type="journal article" date="2016" name="Nat. Commun.">
        <title>SCF(Cyclin F)-dependent degradation of CDC6 suppresses DNA re-replication.</title>
        <authorList>
            <person name="Walter D."/>
            <person name="Hoffmann S."/>
            <person name="Komseli E.S."/>
            <person name="Rappsilber J."/>
            <person name="Gorgoulis V."/>
            <person name="Soerensen C.S."/>
        </authorList>
    </citation>
    <scope>INTERACTION WITH CDC6</scope>
</reference>
<reference key="28">
    <citation type="journal article" date="2019" name="Cell Rep.">
        <title>CCDC84 Acetylation Oscillation Regulates Centrosome Duplication by Modulating HsSAS-6 Degradation.</title>
        <authorList>
            <person name="Wang T."/>
            <person name="Zou Y."/>
            <person name="Huang N."/>
            <person name="Teng J."/>
            <person name="Chen J."/>
        </authorList>
    </citation>
    <scope>INTERACTION WITH SASS6</scope>
</reference>
<reference evidence="33" key="29">
    <citation type="journal article" date="2015" name="Nature">
        <title>Atomic structure of the APC/C and its mechanism of protein ubiquitination.</title>
        <authorList>
            <person name="Chang L."/>
            <person name="Zhang Z."/>
            <person name="Yang J."/>
            <person name="McLaughlin S.H."/>
            <person name="Barford D."/>
        </authorList>
    </citation>
    <scope>STRUCTURE BY ELECTRON MICROSCOPY (3.60 ANGSTROMS) IN COMPLEX WITH APC/C</scope>
    <scope>SUBUNIT</scope>
    <scope>MUTAGENESIS OF SER-40; ARG-47; ARG-52; THR-121; SER-151 AND SER-163</scope>
    <scope>REGION</scope>
</reference>
<reference key="30">
    <citation type="journal article" date="2019" name="J. Neurochem.">
        <title>A novel human Cdh1 mutation impairs anaphase promoting complex/cyclosome activity resulting in microcephaly, psychomotor retardation, and epilepsy.</title>
        <authorList>
            <person name="Rodriguez C."/>
            <person name="Sanchez-Moran I."/>
            <person name="Alvarez S."/>
            <person name="Tirado P."/>
            <person name="Fernandez-Mayoralas D.M."/>
            <person name="Calleja-Perez B."/>
            <person name="Almeida A."/>
            <person name="Fernandez-Jaen A."/>
        </authorList>
    </citation>
    <scope>VARIANT DEE109 GLY-187</scope>
    <scope>CHARACTERIZATION OF VARIANT DEE109 GLY-187</scope>
    <scope>INVOLVEMENT IN DEE109</scope>
</reference>
<reference key="31">
    <citation type="journal article" date="2022" name="Brain">
        <title>De novo FZR1 loss-of-function variants cause developmental and epileptic encephalopathies.</title>
        <authorList>
            <consortium name="MAE Working Group of EuroEPINOMICS RES Consortium"/>
            <person name="Manivannan S.N."/>
            <person name="Roovers J."/>
            <person name="Smal N."/>
            <person name="Myers C.T."/>
            <person name="Turkdogan D."/>
            <person name="Roelens F."/>
            <person name="Kanca O."/>
            <person name="Chung H.L."/>
            <person name="Scholz T."/>
            <person name="Hermann K."/>
            <person name="Bierhals T."/>
            <person name="Caglayan H.S."/>
            <person name="Stamberger H."/>
            <person name="Mefford H."/>
            <person name="de Jonghe P."/>
            <person name="Yamamoto S."/>
            <person name="Weckhuysen S."/>
            <person name="Bellen H.J."/>
        </authorList>
    </citation>
    <scope>VARIANTS DEE109 ASN-187 AND LYS-333</scope>
    <scope>CHARACTERIZATION OF VARIANTS DEE109 ASN-187 AND LYS-333</scope>
    <scope>SUBCELLULAR LOCATION</scope>
    <scope>INVOLVEMENT IN DEE109</scope>
</reference>
<name>FZR1_HUMAN</name>
<evidence type="ECO:0000256" key="1">
    <source>
        <dbReference type="SAM" id="MobiDB-lite"/>
    </source>
</evidence>
<evidence type="ECO:0000269" key="2">
    <source>
    </source>
</evidence>
<evidence type="ECO:0000269" key="3">
    <source>
    </source>
</evidence>
<evidence type="ECO:0000269" key="4">
    <source>
    </source>
</evidence>
<evidence type="ECO:0000269" key="5">
    <source>
    </source>
</evidence>
<evidence type="ECO:0000269" key="6">
    <source>
    </source>
</evidence>
<evidence type="ECO:0000269" key="7">
    <source>
    </source>
</evidence>
<evidence type="ECO:0000269" key="8">
    <source>
    </source>
</evidence>
<evidence type="ECO:0000269" key="9">
    <source>
    </source>
</evidence>
<evidence type="ECO:0000269" key="10">
    <source>
    </source>
</evidence>
<evidence type="ECO:0000269" key="11">
    <source>
    </source>
</evidence>
<evidence type="ECO:0000269" key="12">
    <source>
    </source>
</evidence>
<evidence type="ECO:0000269" key="13">
    <source>
    </source>
</evidence>
<evidence type="ECO:0000269" key="14">
    <source>
    </source>
</evidence>
<evidence type="ECO:0000269" key="15">
    <source>
    </source>
</evidence>
<evidence type="ECO:0000269" key="16">
    <source>
    </source>
</evidence>
<evidence type="ECO:0000269" key="17">
    <source>
    </source>
</evidence>
<evidence type="ECO:0000269" key="18">
    <source>
    </source>
</evidence>
<evidence type="ECO:0000269" key="19">
    <source>
    </source>
</evidence>
<evidence type="ECO:0000303" key="20">
    <source>
    </source>
</evidence>
<evidence type="ECO:0000303" key="21">
    <source>
    </source>
</evidence>
<evidence type="ECO:0000303" key="22">
    <source>
    </source>
</evidence>
<evidence type="ECO:0000303" key="23">
    <source>
    </source>
</evidence>
<evidence type="ECO:0000303" key="24">
    <source>
    </source>
</evidence>
<evidence type="ECO:0000303" key="25">
    <source>
    </source>
</evidence>
<evidence type="ECO:0000303" key="26">
    <source ref="2"/>
</evidence>
<evidence type="ECO:0000303" key="27">
    <source ref="3"/>
</evidence>
<evidence type="ECO:0000303" key="28">
    <source ref="6"/>
</evidence>
<evidence type="ECO:0000305" key="29"/>
<evidence type="ECO:0000305" key="30">
    <source>
    </source>
</evidence>
<evidence type="ECO:0000305" key="31">
    <source>
    </source>
</evidence>
<evidence type="ECO:0000312" key="32">
    <source>
        <dbReference type="HGNC" id="HGNC:24824"/>
    </source>
</evidence>
<evidence type="ECO:0007744" key="33">
    <source>
        <dbReference type="PDB" id="4UI9"/>
    </source>
</evidence>
<evidence type="ECO:0007744" key="34">
    <source>
    </source>
</evidence>
<evidence type="ECO:0007744" key="35">
    <source>
    </source>
</evidence>
<evidence type="ECO:0007744" key="36">
    <source>
    </source>
</evidence>
<evidence type="ECO:0007829" key="37">
    <source>
        <dbReference type="PDB" id="8TAU"/>
    </source>
</evidence>
<evidence type="ECO:0007829" key="38">
    <source>
        <dbReference type="PDB" id="9GAW"/>
    </source>
</evidence>
<feature type="chain" id="PRO_0000051001" description="Fizzy-related protein homolog">
    <location>
        <begin position="1"/>
        <end position="496"/>
    </location>
</feature>
<feature type="repeat" description="WD 1">
    <location>
        <begin position="182"/>
        <end position="222"/>
    </location>
</feature>
<feature type="repeat" description="WD 2">
    <location>
        <begin position="227"/>
        <end position="266"/>
    </location>
</feature>
<feature type="repeat" description="WD 3">
    <location>
        <begin position="269"/>
        <end position="306"/>
    </location>
</feature>
<feature type="repeat" description="WD 4">
    <location>
        <begin position="311"/>
        <end position="350"/>
    </location>
</feature>
<feature type="repeat" description="WD 5">
    <location>
        <begin position="353"/>
        <end position="395"/>
    </location>
</feature>
<feature type="repeat" description="WD 6">
    <location>
        <begin position="397"/>
        <end position="438"/>
    </location>
</feature>
<feature type="repeat" description="WD 7">
    <location>
        <begin position="441"/>
        <end position="480"/>
    </location>
</feature>
<feature type="region of interest" description="Disordered" evidence="1">
    <location>
        <begin position="28"/>
        <end position="51"/>
    </location>
</feature>
<feature type="region of interest" description="Involved in APC/FZR1 E3 ubiquitin-protein ligase complex activity" evidence="13">
    <location>
        <begin position="47"/>
        <end position="52"/>
    </location>
</feature>
<feature type="region of interest" description="Disordered" evidence="1">
    <location>
        <begin position="64"/>
        <end position="88"/>
    </location>
</feature>
<feature type="region of interest" description="Disordered" evidence="1">
    <location>
        <begin position="105"/>
        <end position="166"/>
    </location>
</feature>
<feature type="compositionally biased region" description="Polar residues" evidence="1">
    <location>
        <begin position="32"/>
        <end position="42"/>
    </location>
</feature>
<feature type="compositionally biased region" description="Basic and acidic residues" evidence="1">
    <location>
        <begin position="76"/>
        <end position="86"/>
    </location>
</feature>
<feature type="compositionally biased region" description="Basic and acidic residues" evidence="1">
    <location>
        <begin position="106"/>
        <end position="126"/>
    </location>
</feature>
<feature type="compositionally biased region" description="Polar residues" evidence="1">
    <location>
        <begin position="146"/>
        <end position="160"/>
    </location>
</feature>
<feature type="modified residue" description="Phosphothreonine" evidence="34">
    <location>
        <position position="32"/>
    </location>
</feature>
<feature type="modified residue" description="Phosphoserine" evidence="34 35">
    <location>
        <position position="36"/>
    </location>
</feature>
<feature type="modified residue" description="N6-acetyllysine" evidence="10">
    <location>
        <position position="69"/>
    </location>
</feature>
<feature type="modified residue" description="Phosphoserine" evidence="36">
    <location>
        <position position="133"/>
    </location>
</feature>
<feature type="modified residue" description="Phosphoserine" evidence="34 36">
    <location>
        <position position="138"/>
    </location>
</feature>
<feature type="modified residue" description="Phosphoserine" evidence="34">
    <location>
        <position position="146"/>
    </location>
</feature>
<feature type="modified residue" description="Phosphoserine" evidence="34 35 36">
    <location>
        <position position="151"/>
    </location>
</feature>
<feature type="modified residue" description="N6-acetyllysine" evidence="10">
    <location>
        <position position="159"/>
    </location>
</feature>
<feature type="splice variant" id="VSP_008503" description="In isoform 3." evidence="21 26">
    <location>
        <begin position="130"/>
        <end position="218"/>
    </location>
</feature>
<feature type="splice variant" id="VSP_008504" description="In isoform 2 and isoform 3." evidence="20 21 23 25 26 27 28">
    <location>
        <begin position="481"/>
        <end position="483"/>
    </location>
</feature>
<feature type="sequence variant" id="VAR_087872" description="In DEE109; loss-of-function variant affecting cell cycle regulation; unable to rescue aberrant cell cycle in FZR1-deficient mouse cortical cells; decreased protein levels in patient cells." evidence="16">
    <original>D</original>
    <variation>G</variation>
    <location>
        <position position="187"/>
    </location>
</feature>
<feature type="sequence variant" id="VAR_087873" description="In DEE109; fails to rescue neurodevelopmental defects in a Drosophila model system; does not affect nuclear localization." evidence="18">
    <original>D</original>
    <variation>N</variation>
    <location>
        <position position="187"/>
    </location>
</feature>
<feature type="sequence variant" id="VAR_087874" description="In DEE109; fails to rescue neurodevelopmental defects in a Drosophila model system; does not affect nuclear localization." evidence="18">
    <original>N</original>
    <variation>K</variation>
    <location>
        <position position="333"/>
    </location>
</feature>
<feature type="mutagenesis site" description="Reduced interaction with CCNF. Impaired degradation." evidence="15">
    <original>RRLLRQIV</original>
    <variation>AAAAAQAA</variation>
    <location>
        <begin position="7"/>
        <end position="14"/>
    </location>
</feature>
<feature type="mutagenesis site" description="Constitutively active; when associated with A-121; A-151 and A-163. Does not affect APC/FZR1 E3 ubiquitin-protein ligase complex activity; when associated with A-121; A-151 and A-163. Decreases APC/FZR1 E3 ubiquitin-protein ligase complex activity; when associated with A-121 and A-151. Decreases APC/FZR1 E3 ubiquitin-protein ligase complex activity; when associated with A-121 and A-163." evidence="7 13">
    <original>S</original>
    <variation>A</variation>
    <location>
        <position position="40"/>
    </location>
</feature>
<feature type="mutagenesis site" description="Inhibits APC/FZR1 E3 ubiquitin-protein ligase complex activity." evidence="13">
    <original>R</original>
    <variation>A</variation>
    <location>
        <position position="47"/>
    </location>
</feature>
<feature type="mutagenesis site" description="Inhibits APC/FZR1 E3 ubiquitin-protein ligase complex activity." evidence="13">
    <original>R</original>
    <variation>A</variation>
    <location>
        <position position="52"/>
    </location>
</feature>
<feature type="mutagenesis site" description="Constitutively active; when associated with A-40; A-151 and A-163. Does not affect APC/FZR1 E3 ubiquitin-protein ligase complex activity; when associated with A-40; A-151 and A-163. Decreases APC/FZR1 E3 ubiquitin-protein ligase complex activity; when associated with A-40 and A-151. Decreases APC/FZR1 E3 ubiquitin-protein ligase complex activity; when associated with A-40 and A-163. Decreases APC/FZR1 E3 ubiquitin-protein ligase complex activity; when associated with A-151 and A-163." evidence="7 13">
    <original>T</original>
    <variation>A</variation>
    <location>
        <position position="121"/>
    </location>
</feature>
<feature type="mutagenesis site" description="Constitutively active; when associated with A-40; A-121 and A-163. Does not affect ubiquitination; when associated with A-40; A-121 and A-163. Decreases ubiquitination; when associated with A-40 and A-163. Decreases ubiquitination; when associated with A-121 and A-163." evidence="7 13">
    <original>S</original>
    <variation>A</variation>
    <location>
        <position position="151"/>
    </location>
</feature>
<feature type="mutagenesis site" description="Constitutively active; when associated with A-40; A-121 and A-151. Does not affect APC/FZR1 E3 ubiquitin-protein ligase complex activity; when associated with A-40; A-121 and A-151. Decreases APC/FZR1 E3 ubiquitin-protein ligase complex activity; when associated with A-40 and A-121. Decreases APC/FZR1 E3 ubiquitin-protein ligase complex activity; when associated with A-121 and A-151. Decreases ubiquitination; when associated with A-40 and A-151." evidence="7 13">
    <original>S</original>
    <variation>A</variation>
    <location>
        <position position="163"/>
    </location>
</feature>
<feature type="mutagenesis site" description="Reduced interaction with CCNF." evidence="15">
    <original>RVL</original>
    <variation>AVA</variation>
    <location>
        <begin position="445"/>
        <end position="447"/>
    </location>
</feature>
<feature type="sequence conflict" description="In Ref. 3; AAF20266." evidence="29" ref="3">
    <original>A</original>
    <variation>S</variation>
    <location>
        <position position="259"/>
    </location>
</feature>
<feature type="sequence conflict" description="In Ref. 3; AAF20266." evidence="29" ref="3">
    <original>G</original>
    <variation>W</variation>
    <location>
        <position position="275"/>
    </location>
</feature>
<feature type="sequence conflict" description="In Ref. 2; BAA86954/BAA86955." evidence="29" ref="2">
    <original>Q</original>
    <variation>H</variation>
    <location>
        <position position="326"/>
    </location>
</feature>
<feature type="sequence conflict" description="In Ref. 3; AAF20266." evidence="29" ref="3">
    <original>N</original>
    <variation>I</variation>
    <location>
        <position position="341"/>
    </location>
</feature>
<feature type="helix" evidence="38">
    <location>
        <begin position="3"/>
        <end position="12"/>
    </location>
</feature>
<feature type="strand" evidence="38">
    <location>
        <begin position="47"/>
        <end position="49"/>
    </location>
</feature>
<feature type="helix" evidence="38">
    <location>
        <begin position="57"/>
        <end position="62"/>
    </location>
</feature>
<feature type="helix" evidence="38">
    <location>
        <begin position="89"/>
        <end position="99"/>
    </location>
</feature>
<feature type="helix" evidence="37">
    <location>
        <begin position="114"/>
        <end position="116"/>
    </location>
</feature>
<feature type="strand" evidence="37">
    <location>
        <begin position="117"/>
        <end position="120"/>
    </location>
</feature>
<feature type="helix" evidence="38">
    <location>
        <begin position="155"/>
        <end position="161"/>
    </location>
</feature>
<feature type="strand" evidence="38">
    <location>
        <begin position="178"/>
        <end position="180"/>
    </location>
</feature>
<feature type="strand" evidence="38">
    <location>
        <begin position="193"/>
        <end position="195"/>
    </location>
</feature>
<feature type="strand" evidence="38">
    <location>
        <begin position="199"/>
        <end position="205"/>
    </location>
</feature>
<feature type="strand" evidence="38">
    <location>
        <begin position="208"/>
        <end position="213"/>
    </location>
</feature>
<feature type="turn" evidence="38">
    <location>
        <begin position="214"/>
        <end position="216"/>
    </location>
</feature>
<feature type="strand" evidence="37">
    <location>
        <begin position="219"/>
        <end position="224"/>
    </location>
</feature>
<feature type="helix" evidence="38">
    <location>
        <begin position="225"/>
        <end position="228"/>
    </location>
</feature>
<feature type="strand" evidence="38">
    <location>
        <begin position="232"/>
        <end position="234"/>
    </location>
</feature>
<feature type="strand" evidence="38">
    <location>
        <begin position="239"/>
        <end position="251"/>
    </location>
</feature>
<feature type="strand" evidence="38">
    <location>
        <begin position="254"/>
        <end position="260"/>
    </location>
</feature>
<feature type="strand" evidence="37">
    <location>
        <begin position="262"/>
        <end position="267"/>
    </location>
</feature>
<feature type="strand" evidence="38">
    <location>
        <begin position="274"/>
        <end position="280"/>
    </location>
</feature>
<feature type="strand" evidence="38">
    <location>
        <begin position="283"/>
        <end position="288"/>
    </location>
</feature>
<feature type="strand" evidence="38">
    <location>
        <begin position="291"/>
        <end position="298"/>
    </location>
</feature>
<feature type="strand" evidence="38">
    <location>
        <begin position="300"/>
        <end position="302"/>
    </location>
</feature>
<feature type="strand" evidence="38">
    <location>
        <begin position="308"/>
        <end position="310"/>
    </location>
</feature>
<feature type="strand" evidence="37">
    <location>
        <begin position="312"/>
        <end position="314"/>
    </location>
</feature>
<feature type="strand" evidence="37">
    <location>
        <begin position="316"/>
        <end position="321"/>
    </location>
</feature>
<feature type="strand" evidence="38">
    <location>
        <begin position="323"/>
        <end position="326"/>
    </location>
</feature>
<feature type="strand" evidence="38">
    <location>
        <begin position="328"/>
        <end position="332"/>
    </location>
</feature>
<feature type="turn" evidence="37">
    <location>
        <begin position="333"/>
        <end position="335"/>
    </location>
</feature>
<feature type="strand" evidence="38">
    <location>
        <begin position="337"/>
        <end position="340"/>
    </location>
</feature>
<feature type="strand" evidence="38">
    <location>
        <begin position="348"/>
        <end position="351"/>
    </location>
</feature>
<feature type="strand" evidence="38">
    <location>
        <begin position="361"/>
        <end position="363"/>
    </location>
</feature>
<feature type="strand" evidence="38">
    <location>
        <begin position="365"/>
        <end position="367"/>
    </location>
</feature>
<feature type="strand" evidence="38">
    <location>
        <begin position="370"/>
        <end position="373"/>
    </location>
</feature>
<feature type="turn" evidence="38">
    <location>
        <begin position="377"/>
        <end position="379"/>
    </location>
</feature>
<feature type="strand" evidence="38">
    <location>
        <begin position="381"/>
        <end position="386"/>
    </location>
</feature>
<feature type="turn" evidence="38">
    <location>
        <begin position="387"/>
        <end position="389"/>
    </location>
</feature>
<feature type="strand" evidence="38">
    <location>
        <begin position="392"/>
        <end position="397"/>
    </location>
</feature>
<feature type="strand" evidence="38">
    <location>
        <begin position="402"/>
        <end position="406"/>
    </location>
</feature>
<feature type="strand" evidence="38">
    <location>
        <begin position="409"/>
        <end position="418"/>
    </location>
</feature>
<feature type="turn" evidence="38">
    <location>
        <begin position="420"/>
        <end position="422"/>
    </location>
</feature>
<feature type="strand" evidence="38">
    <location>
        <begin position="424"/>
        <end position="429"/>
    </location>
</feature>
<feature type="turn" evidence="38">
    <location>
        <begin position="430"/>
        <end position="432"/>
    </location>
</feature>
<feature type="strand" evidence="38">
    <location>
        <begin position="437"/>
        <end position="440"/>
    </location>
</feature>
<feature type="strand" evidence="38">
    <location>
        <begin position="448"/>
        <end position="451"/>
    </location>
</feature>
<feature type="strand" evidence="38">
    <location>
        <begin position="453"/>
        <end position="456"/>
    </location>
</feature>
<feature type="strand" evidence="38">
    <location>
        <begin position="458"/>
        <end position="461"/>
    </location>
</feature>
<feature type="strand" evidence="38">
    <location>
        <begin position="465"/>
        <end position="470"/>
    </location>
</feature>
<feature type="helix" evidence="38">
    <location>
        <begin position="491"/>
        <end position="494"/>
    </location>
</feature>
<organism>
    <name type="scientific">Homo sapiens</name>
    <name type="common">Human</name>
    <dbReference type="NCBI Taxonomy" id="9606"/>
    <lineage>
        <taxon>Eukaryota</taxon>
        <taxon>Metazoa</taxon>
        <taxon>Chordata</taxon>
        <taxon>Craniata</taxon>
        <taxon>Vertebrata</taxon>
        <taxon>Euteleostomi</taxon>
        <taxon>Mammalia</taxon>
        <taxon>Eutheria</taxon>
        <taxon>Euarchontoglires</taxon>
        <taxon>Primates</taxon>
        <taxon>Haplorrhini</taxon>
        <taxon>Catarrhini</taxon>
        <taxon>Hominidae</taxon>
        <taxon>Homo</taxon>
    </lineage>
</organism>
<dbReference type="EMBL" id="AF102508">
    <property type="protein sequence ID" value="AAD26624.1"/>
    <property type="status" value="ALT_SEQ"/>
    <property type="molecule type" value="mRNA"/>
</dbReference>
<dbReference type="EMBL" id="AF102507">
    <property type="protein sequence ID" value="AAD26623.1"/>
    <property type="status" value="ALT_SEQ"/>
    <property type="molecule type" value="mRNA"/>
</dbReference>
<dbReference type="EMBL" id="AB013462">
    <property type="protein sequence ID" value="BAA86954.1"/>
    <property type="molecule type" value="mRNA"/>
</dbReference>
<dbReference type="EMBL" id="AB013463">
    <property type="protein sequence ID" value="BAA86955.1"/>
    <property type="molecule type" value="mRNA"/>
</dbReference>
<dbReference type="EMBL" id="AF080397">
    <property type="protein sequence ID" value="AAF20266.1"/>
    <property type="molecule type" value="mRNA"/>
</dbReference>
<dbReference type="EMBL" id="AF083810">
    <property type="protein sequence ID" value="AAD52030.1"/>
    <property type="molecule type" value="mRNA"/>
</dbReference>
<dbReference type="EMBL" id="AF433157">
    <property type="protein sequence ID" value="AAL28117.1"/>
    <property type="molecule type" value="mRNA"/>
</dbReference>
<dbReference type="EMBL" id="BT007115">
    <property type="protein sequence ID" value="AAP35779.1"/>
    <property type="molecule type" value="mRNA"/>
</dbReference>
<dbReference type="EMBL" id="AC005787">
    <property type="protein sequence ID" value="AAC62835.1"/>
    <property type="molecule type" value="Genomic_DNA"/>
</dbReference>
<dbReference type="EMBL" id="AC005786">
    <property type="protein sequence ID" value="AAC62836.1"/>
    <property type="molecule type" value="Genomic_DNA"/>
</dbReference>
<dbReference type="EMBL" id="AB033068">
    <property type="protein sequence ID" value="BAA86556.1"/>
    <property type="status" value="ALT_INIT"/>
    <property type="molecule type" value="mRNA"/>
</dbReference>
<dbReference type="EMBL" id="BC013413">
    <property type="protein sequence ID" value="AAH13413.1"/>
    <property type="molecule type" value="mRNA"/>
</dbReference>
<dbReference type="CCDS" id="CCDS12109.1">
    <molecule id="Q9UM11-2"/>
</dbReference>
<dbReference type="CCDS" id="CCDS45916.1">
    <molecule id="Q9UM11-1"/>
</dbReference>
<dbReference type="CCDS" id="CCDS45917.1">
    <molecule id="Q9UM11-3"/>
</dbReference>
<dbReference type="RefSeq" id="NP_001129669.1">
    <molecule id="Q9UM11-3"/>
    <property type="nucleotide sequence ID" value="NM_001136197.1"/>
</dbReference>
<dbReference type="RefSeq" id="NP_001129670.1">
    <molecule id="Q9UM11-1"/>
    <property type="nucleotide sequence ID" value="NM_001136198.1"/>
</dbReference>
<dbReference type="RefSeq" id="NP_057347.2">
    <molecule id="Q9UM11-2"/>
    <property type="nucleotide sequence ID" value="NM_016263.3"/>
</dbReference>
<dbReference type="RefSeq" id="XP_005259630.1">
    <molecule id="Q9UM11-1"/>
    <property type="nucleotide sequence ID" value="XM_005259573.6"/>
</dbReference>
<dbReference type="RefSeq" id="XP_054177155.1">
    <molecule id="Q9UM11-1"/>
    <property type="nucleotide sequence ID" value="XM_054321180.1"/>
</dbReference>
<dbReference type="PDB" id="4UI9">
    <property type="method" value="EM"/>
    <property type="resolution" value="3.60 A"/>
    <property type="chains" value="R=1-496"/>
</dbReference>
<dbReference type="PDB" id="5L9T">
    <property type="method" value="EM"/>
    <property type="resolution" value="6.40 A"/>
    <property type="chains" value="R=1-496"/>
</dbReference>
<dbReference type="PDB" id="5L9U">
    <property type="method" value="EM"/>
    <property type="resolution" value="6.40 A"/>
    <property type="chains" value="R=1-496"/>
</dbReference>
<dbReference type="PDB" id="8TAR">
    <property type="method" value="EM"/>
    <property type="resolution" value="4.00 A"/>
    <property type="chains" value="R=1-496"/>
</dbReference>
<dbReference type="PDB" id="8TAU">
    <property type="method" value="EM"/>
    <property type="resolution" value="3.50 A"/>
    <property type="chains" value="R=1-496"/>
</dbReference>
<dbReference type="PDB" id="9GAW">
    <property type="method" value="EM"/>
    <property type="resolution" value="2.90 A"/>
    <property type="chains" value="R=1-496"/>
</dbReference>
<dbReference type="PDBsum" id="4UI9"/>
<dbReference type="PDBsum" id="5L9T"/>
<dbReference type="PDBsum" id="5L9U"/>
<dbReference type="PDBsum" id="8TAR"/>
<dbReference type="PDBsum" id="8TAU"/>
<dbReference type="PDBsum" id="9GAW"/>
<dbReference type="EMDB" id="EMD-13931"/>
<dbReference type="EMDB" id="EMD-19711"/>
<dbReference type="EMDB" id="EMD-2924"/>
<dbReference type="EMDB" id="EMD-41140"/>
<dbReference type="EMDB" id="EMD-41142"/>
<dbReference type="EMDB" id="EMD-51190"/>
<dbReference type="SMR" id="Q9UM11"/>
<dbReference type="BioGRID" id="119489">
    <property type="interactions" value="1144"/>
</dbReference>
<dbReference type="ComplexPortal" id="CPX-6088">
    <property type="entry name" value="Anaphase-promoting complex, FRZ1 variant"/>
</dbReference>
<dbReference type="DIP" id="DIP-38700N"/>
<dbReference type="ELM" id="Q9UM11"/>
<dbReference type="FunCoup" id="Q9UM11">
    <property type="interactions" value="3259"/>
</dbReference>
<dbReference type="IntAct" id="Q9UM11">
    <property type="interactions" value="69"/>
</dbReference>
<dbReference type="MINT" id="Q9UM11"/>
<dbReference type="STRING" id="9606.ENSP00000378529"/>
<dbReference type="ChEMBL" id="CHEMBL4523493"/>
<dbReference type="GlyGen" id="Q9UM11">
    <property type="glycosylation" value="4 sites, 1 O-linked glycan (4 sites)"/>
</dbReference>
<dbReference type="iPTMnet" id="Q9UM11"/>
<dbReference type="PhosphoSitePlus" id="Q9UM11"/>
<dbReference type="BioMuta" id="FZR1"/>
<dbReference type="DMDM" id="37537753"/>
<dbReference type="jPOST" id="Q9UM11"/>
<dbReference type="MassIVE" id="Q9UM11"/>
<dbReference type="PaxDb" id="9606-ENSP00000378529"/>
<dbReference type="PeptideAtlas" id="Q9UM11"/>
<dbReference type="ProteomicsDB" id="85167">
    <molecule id="Q9UM11-1"/>
</dbReference>
<dbReference type="ProteomicsDB" id="85168">
    <molecule id="Q9UM11-2"/>
</dbReference>
<dbReference type="ProteomicsDB" id="85169">
    <molecule id="Q9UM11-3"/>
</dbReference>
<dbReference type="Pumba" id="Q9UM11"/>
<dbReference type="Antibodypedia" id="11031">
    <property type="antibodies" value="349 antibodies from 35 providers"/>
</dbReference>
<dbReference type="DNASU" id="51343"/>
<dbReference type="Ensembl" id="ENST00000313639.8">
    <molecule id="Q9UM11-3"/>
    <property type="protein sequence ID" value="ENSP00000321800.7"/>
    <property type="gene ID" value="ENSG00000105325.15"/>
</dbReference>
<dbReference type="Ensembl" id="ENST00000395095.7">
    <molecule id="Q9UM11-1"/>
    <property type="protein sequence ID" value="ENSP00000378529.2"/>
    <property type="gene ID" value="ENSG00000105325.15"/>
</dbReference>
<dbReference type="Ensembl" id="ENST00000441788.7">
    <molecule id="Q9UM11-2"/>
    <property type="protein sequence ID" value="ENSP00000410369.1"/>
    <property type="gene ID" value="ENSG00000105325.15"/>
</dbReference>
<dbReference type="Ensembl" id="ENST00000652521.1">
    <molecule id="Q9UM11-2"/>
    <property type="protein sequence ID" value="ENSP00000498659.1"/>
    <property type="gene ID" value="ENSG00000105325.15"/>
</dbReference>
<dbReference type="GeneID" id="51343"/>
<dbReference type="KEGG" id="hsa:51343"/>
<dbReference type="MANE-Select" id="ENST00000441788.7">
    <molecule id="Q9UM11-2"/>
    <property type="protein sequence ID" value="ENSP00000410369.1"/>
    <property type="RefSeq nucleotide sequence ID" value="NM_016263.4"/>
    <property type="RefSeq protein sequence ID" value="NP_057347.2"/>
</dbReference>
<dbReference type="UCSC" id="uc002lxt.3">
    <molecule id="Q9UM11-1"/>
    <property type="organism name" value="human"/>
</dbReference>
<dbReference type="AGR" id="HGNC:24824"/>
<dbReference type="CTD" id="51343"/>
<dbReference type="DisGeNET" id="51343"/>
<dbReference type="GeneCards" id="FZR1"/>
<dbReference type="HGNC" id="HGNC:24824">
    <property type="gene designation" value="FZR1"/>
</dbReference>
<dbReference type="HPA" id="ENSG00000105325">
    <property type="expression patterns" value="Low tissue specificity"/>
</dbReference>
<dbReference type="MalaCards" id="FZR1"/>
<dbReference type="MIM" id="603619">
    <property type="type" value="gene"/>
</dbReference>
<dbReference type="MIM" id="620145">
    <property type="type" value="phenotype"/>
</dbReference>
<dbReference type="neXtProt" id="NX_Q9UM11"/>
<dbReference type="OpenTargets" id="ENSG00000105325"/>
<dbReference type="Orphanet" id="442835">
    <property type="disease" value="Non-specific early-onset epileptic encephalopathy"/>
</dbReference>
<dbReference type="PharmGKB" id="PA134896003"/>
<dbReference type="VEuPathDB" id="HostDB:ENSG00000105325"/>
<dbReference type="eggNOG" id="KOG0305">
    <property type="taxonomic scope" value="Eukaryota"/>
</dbReference>
<dbReference type="GeneTree" id="ENSGT00950000183104"/>
<dbReference type="HOGENOM" id="CLU_014831_4_2_1"/>
<dbReference type="InParanoid" id="Q9UM11"/>
<dbReference type="OMA" id="FHHEYEK"/>
<dbReference type="OrthoDB" id="10263272at2759"/>
<dbReference type="PAN-GO" id="Q9UM11">
    <property type="GO annotations" value="5 GO annotations based on evolutionary models"/>
</dbReference>
<dbReference type="PhylomeDB" id="Q9UM11"/>
<dbReference type="TreeFam" id="TF101066"/>
<dbReference type="PathwayCommons" id="Q9UM11"/>
<dbReference type="Reactome" id="R-HSA-174084">
    <property type="pathway name" value="Autodegradation of Cdh1 by Cdh1:APC/C"/>
</dbReference>
<dbReference type="Reactome" id="R-HSA-174113">
    <property type="pathway name" value="SCF-beta-TrCP mediated degradation of Emi1"/>
</dbReference>
<dbReference type="Reactome" id="R-HSA-174178">
    <property type="pathway name" value="APC/C:Cdh1 mediated degradation of Cdc20 and other APC/C:Cdh1 targeted proteins in late mitosis/early G1"/>
</dbReference>
<dbReference type="Reactome" id="R-HSA-176407">
    <property type="pathway name" value="Conversion from APC/C:Cdc20 to APC/C:Cdh1 in late anaphase"/>
</dbReference>
<dbReference type="Reactome" id="R-HSA-176408">
    <property type="pathway name" value="Regulation of APC/C activators between G1/S and early anaphase"/>
</dbReference>
<dbReference type="Reactome" id="R-HSA-176417">
    <property type="pathway name" value="Phosphorylation of Emi1"/>
</dbReference>
<dbReference type="Reactome" id="R-HSA-2559582">
    <property type="pathway name" value="Senescence-Associated Secretory Phenotype (SASP)"/>
</dbReference>
<dbReference type="Reactome" id="R-HSA-68867">
    <property type="pathway name" value="Assembly of the pre-replicative complex"/>
</dbReference>
<dbReference type="Reactome" id="R-HSA-69017">
    <property type="pathway name" value="CDK-mediated phosphorylation and removal of Cdc6"/>
</dbReference>
<dbReference type="Reactome" id="R-HSA-69656">
    <property type="pathway name" value="Cyclin A:Cdk2-associated events at S phase entry"/>
</dbReference>
<dbReference type="Reactome" id="R-HSA-8853884">
    <property type="pathway name" value="Transcriptional Regulation by VENTX"/>
</dbReference>
<dbReference type="Reactome" id="R-HSA-9687136">
    <property type="pathway name" value="Aberrant regulation of mitotic exit in cancer due to RB1 defects"/>
</dbReference>
<dbReference type="Reactome" id="R-HSA-983168">
    <property type="pathway name" value="Antigen processing: Ubiquitination &amp; Proteasome degradation"/>
</dbReference>
<dbReference type="SignaLink" id="Q9UM11"/>
<dbReference type="SIGNOR" id="Q9UM11"/>
<dbReference type="UniPathway" id="UPA00143"/>
<dbReference type="BioGRID-ORCS" id="51343">
    <property type="hits" value="131 hits in 1184 CRISPR screens"/>
</dbReference>
<dbReference type="CD-CODE" id="8C2F96ED">
    <property type="entry name" value="Centrosome"/>
</dbReference>
<dbReference type="ChiTaRS" id="FZR1">
    <property type="organism name" value="human"/>
</dbReference>
<dbReference type="EvolutionaryTrace" id="Q9UM11"/>
<dbReference type="GeneWiki" id="FZR1"/>
<dbReference type="GenomeRNAi" id="51343"/>
<dbReference type="Pharos" id="Q9UM11">
    <property type="development level" value="Tbio"/>
</dbReference>
<dbReference type="PRO" id="PR:Q9UM11"/>
<dbReference type="Proteomes" id="UP000005640">
    <property type="component" value="Chromosome 19"/>
</dbReference>
<dbReference type="RNAct" id="Q9UM11">
    <property type="molecule type" value="protein"/>
</dbReference>
<dbReference type="Bgee" id="ENSG00000105325">
    <property type="expression patterns" value="Expressed in ventricular zone and 176 other cell types or tissues"/>
</dbReference>
<dbReference type="ExpressionAtlas" id="Q9UM11">
    <property type="expression patterns" value="baseline and differential"/>
</dbReference>
<dbReference type="GO" id="GO:0005680">
    <property type="term" value="C:anaphase-promoting complex"/>
    <property type="evidence" value="ECO:0000318"/>
    <property type="project" value="GO_Central"/>
</dbReference>
<dbReference type="GO" id="GO:0005829">
    <property type="term" value="C:cytosol"/>
    <property type="evidence" value="ECO:0000304"/>
    <property type="project" value="Reactome"/>
</dbReference>
<dbReference type="GO" id="GO:0031965">
    <property type="term" value="C:nuclear membrane"/>
    <property type="evidence" value="ECO:0000314"/>
    <property type="project" value="HPA"/>
</dbReference>
<dbReference type="GO" id="GO:0005654">
    <property type="term" value="C:nucleoplasm"/>
    <property type="evidence" value="ECO:0000314"/>
    <property type="project" value="HPA"/>
</dbReference>
<dbReference type="GO" id="GO:0005634">
    <property type="term" value="C:nucleus"/>
    <property type="evidence" value="ECO:0000314"/>
    <property type="project" value="UniProtKB"/>
</dbReference>
<dbReference type="GO" id="GO:0010997">
    <property type="term" value="F:anaphase-promoting complex binding"/>
    <property type="evidence" value="ECO:0000318"/>
    <property type="project" value="GO_Central"/>
</dbReference>
<dbReference type="GO" id="GO:1990757">
    <property type="term" value="F:ubiquitin ligase activator activity"/>
    <property type="evidence" value="ECO:0000318"/>
    <property type="project" value="GO_Central"/>
</dbReference>
<dbReference type="GO" id="GO:1990756">
    <property type="term" value="F:ubiquitin-like ligase-substrate adaptor activity"/>
    <property type="evidence" value="ECO:0000314"/>
    <property type="project" value="UniProt"/>
</dbReference>
<dbReference type="GO" id="GO:0031145">
    <property type="term" value="P:anaphase-promoting complex-dependent catabolic process"/>
    <property type="evidence" value="ECO:0000314"/>
    <property type="project" value="UniProtKB"/>
</dbReference>
<dbReference type="GO" id="GO:0051301">
    <property type="term" value="P:cell division"/>
    <property type="evidence" value="ECO:0007669"/>
    <property type="project" value="UniProtKB-KW"/>
</dbReference>
<dbReference type="GO" id="GO:0006281">
    <property type="term" value="P:DNA repair"/>
    <property type="evidence" value="ECO:0007669"/>
    <property type="project" value="UniProtKB-KW"/>
</dbReference>
<dbReference type="GO" id="GO:0070306">
    <property type="term" value="P:lens fiber cell differentiation"/>
    <property type="evidence" value="ECO:0007669"/>
    <property type="project" value="Ensembl"/>
</dbReference>
<dbReference type="GO" id="GO:0007095">
    <property type="term" value="P:mitotic G2 DNA damage checkpoint signaling"/>
    <property type="evidence" value="ECO:0000314"/>
    <property type="project" value="UniProtKB"/>
</dbReference>
<dbReference type="GO" id="GO:2000773">
    <property type="term" value="P:negative regulation of cellular senescence"/>
    <property type="evidence" value="ECO:0000250"/>
    <property type="project" value="BHF-UCL"/>
</dbReference>
<dbReference type="GO" id="GO:1905786">
    <property type="term" value="P:positive regulation of anaphase-promoting complex-dependent catabolic process"/>
    <property type="evidence" value="ECO:0000318"/>
    <property type="project" value="GO_Central"/>
</dbReference>
<dbReference type="GO" id="GO:0008284">
    <property type="term" value="P:positive regulation of cell population proliferation"/>
    <property type="evidence" value="ECO:0007669"/>
    <property type="project" value="Ensembl"/>
</dbReference>
<dbReference type="GO" id="GO:1904668">
    <property type="term" value="P:positive regulation of ubiquitin protein ligase activity"/>
    <property type="evidence" value="ECO:0000314"/>
    <property type="project" value="UniProtKB"/>
</dbReference>
<dbReference type="GO" id="GO:0070979">
    <property type="term" value="P:protein K11-linked ubiquitination"/>
    <property type="evidence" value="ECO:0000304"/>
    <property type="project" value="UniProtKB"/>
</dbReference>
<dbReference type="GO" id="GO:0051445">
    <property type="term" value="P:regulation of meiotic cell cycle"/>
    <property type="evidence" value="ECO:0000303"/>
    <property type="project" value="ComplexPortal"/>
</dbReference>
<dbReference type="GO" id="GO:0040020">
    <property type="term" value="P:regulation of meiotic nuclear division"/>
    <property type="evidence" value="ECO:0007669"/>
    <property type="project" value="Ensembl"/>
</dbReference>
<dbReference type="GO" id="GO:0007346">
    <property type="term" value="P:regulation of mitotic cell cycle"/>
    <property type="evidence" value="ECO:0000303"/>
    <property type="project" value="ComplexPortal"/>
</dbReference>
<dbReference type="CDD" id="cd00200">
    <property type="entry name" value="WD40"/>
    <property type="match status" value="1"/>
</dbReference>
<dbReference type="DisProt" id="DP01524"/>
<dbReference type="FunFam" id="2.130.10.10:FF:000025">
    <property type="entry name" value="FIZZY-related 2 isoform 1"/>
    <property type="match status" value="1"/>
</dbReference>
<dbReference type="Gene3D" id="2.130.10.10">
    <property type="entry name" value="YVTN repeat-like/Quinoprotein amine dehydrogenase"/>
    <property type="match status" value="1"/>
</dbReference>
<dbReference type="InterPro" id="IPR033010">
    <property type="entry name" value="Cdc20/Fizzy"/>
</dbReference>
<dbReference type="InterPro" id="IPR015943">
    <property type="entry name" value="WD40/YVTN_repeat-like_dom_sf"/>
</dbReference>
<dbReference type="InterPro" id="IPR056150">
    <property type="entry name" value="WD40_CDC20-Fz"/>
</dbReference>
<dbReference type="InterPro" id="IPR019775">
    <property type="entry name" value="WD40_repeat_CS"/>
</dbReference>
<dbReference type="InterPro" id="IPR036322">
    <property type="entry name" value="WD40_repeat_dom_sf"/>
</dbReference>
<dbReference type="InterPro" id="IPR001680">
    <property type="entry name" value="WD40_rpt"/>
</dbReference>
<dbReference type="PANTHER" id="PTHR19918">
    <property type="entry name" value="CELL DIVISION CYCLE 20 CDC20 FIZZY -RELATED"/>
    <property type="match status" value="1"/>
</dbReference>
<dbReference type="PANTHER" id="PTHR19918:SF1">
    <property type="entry name" value="FIZZY-RELATED PROTEIN HOMOLOG"/>
    <property type="match status" value="1"/>
</dbReference>
<dbReference type="Pfam" id="PF24807">
    <property type="entry name" value="WD40_CDC20-Fz"/>
    <property type="match status" value="1"/>
</dbReference>
<dbReference type="SMART" id="SM00320">
    <property type="entry name" value="WD40"/>
    <property type="match status" value="6"/>
</dbReference>
<dbReference type="SUPFAM" id="SSF50978">
    <property type="entry name" value="WD40 repeat-like"/>
    <property type="match status" value="1"/>
</dbReference>
<dbReference type="PROSITE" id="PS00678">
    <property type="entry name" value="WD_REPEATS_1"/>
    <property type="match status" value="2"/>
</dbReference>
<dbReference type="PROSITE" id="PS50082">
    <property type="entry name" value="WD_REPEATS_2"/>
    <property type="match status" value="3"/>
</dbReference>
<dbReference type="PROSITE" id="PS50294">
    <property type="entry name" value="WD_REPEATS_REGION"/>
    <property type="match status" value="1"/>
</dbReference>
<proteinExistence type="evidence at protein level"/>
<sequence>MDQDYERRLLRQIVIQNENTMPRVTEMRRTLTPASSPVSSPSKHGDRFIPSRAGANWSVNFHRINENEKSPSQNRKAKDATSDNGKDGLAYSALLKNELLGAGIEKVQDPQTEDRRLQPSTPEKKGLFTYSLSTKRSSPDDGNDVSPYSLSPVSNKSQKLLRSPRKPTRKISKIPFKVLDAPELQDDFYLNLVDWSSLNVLSVGLGTCVYLWSACTSQVTRLCDLSVEGDSVTSVGWSERGNLVAVGTHKGFVQIWDAAAGKKLSMLEGHTARVGALAWNAEQLSSGSRDRMILQRDIRTPPLQSERRLQGHRQEVCGLKWSTDHQLLASGGNDNKLLVWNHSSLSPVQQYTEHLAAVKAIAWSPHQHGLLASGGGTADRCIRFWNTLTGQPLQCIDTGSQVCNLAWSKHANELVSTHGYSQNQILVWKYPSLTQVAKLTGHSYRVLYLAMSPDGEAIVTGAGDETLRFWNVFSKTRSTKVKWESVSVLNLFTRIR</sequence>